<sequence length="301" mass="33977">MNLPDNSIHLQLPRPVCEAIIRPVPEHRADQELSEIYRDLKATFGVPWVGVITQAVAYYRPFFAEAWRRFAPSAKTHFFERASDDIRIRSWELMGQSFVIEGQTDRLREMGYSVREIGQIRAVLDIFDYGNPKYLIFATAIKEGLLSGRTFGGAAGDARCHFPRSPICQIDPIPVMVEEHHAGGTLSQVYADIKQTLQLPFINSDYKAMARWPSYLEQAWGALKPCIDTPAYQAGRFDINARALAALDALPTAYRMSRDDALQAGLSEAQTDELIQVISLFQWMLSGLVLNVTHFKQQALK</sequence>
<name>HADD_PSEPU</name>
<gene>
    <name type="primary">hadD</name>
</gene>
<dbReference type="EC" id="3.8.1.9"/>
<dbReference type="EMBL" id="M81841">
    <property type="protein sequence ID" value="AAA25831.1"/>
    <property type="status" value="ALT_FRAME"/>
    <property type="molecule type" value="Genomic_DNA"/>
</dbReference>
<dbReference type="PIR" id="B41840">
    <property type="entry name" value="B41840"/>
</dbReference>
<dbReference type="PDB" id="5GZX">
    <property type="method" value="X-ray"/>
    <property type="resolution" value="2.35 A"/>
    <property type="chains" value="A/B/C/D=1-301"/>
</dbReference>
<dbReference type="PDB" id="5GZY">
    <property type="method" value="X-ray"/>
    <property type="resolution" value="2.18 A"/>
    <property type="chains" value="A/B/C/D=1-301"/>
</dbReference>
<dbReference type="PDB" id="5H00">
    <property type="method" value="X-ray"/>
    <property type="resolution" value="2.64 A"/>
    <property type="chains" value="A/B/C/D=1-301"/>
</dbReference>
<dbReference type="PDB" id="5H01">
    <property type="method" value="X-ray"/>
    <property type="resolution" value="2.19 A"/>
    <property type="chains" value="A/B/C/D=1-301"/>
</dbReference>
<dbReference type="PDBsum" id="5GZX"/>
<dbReference type="PDBsum" id="5GZY"/>
<dbReference type="PDBsum" id="5H00"/>
<dbReference type="PDBsum" id="5H01"/>
<dbReference type="SMR" id="Q52086"/>
<dbReference type="BRENDA" id="3.8.1.9">
    <property type="organism ID" value="5092"/>
</dbReference>
<dbReference type="GO" id="GO:0033975">
    <property type="term" value="F:(R)-2-haloacid dehalogenase activity"/>
    <property type="evidence" value="ECO:0007669"/>
    <property type="project" value="UniProtKB-EC"/>
</dbReference>
<dbReference type="Gene3D" id="1.20.1290.10">
    <property type="entry name" value="AhpD-like"/>
    <property type="match status" value="2"/>
</dbReference>
<dbReference type="InterPro" id="IPR019714">
    <property type="entry name" value="2-haloacid_dehalogenase_DehI"/>
</dbReference>
<dbReference type="InterPro" id="IPR029032">
    <property type="entry name" value="AhpD-like"/>
</dbReference>
<dbReference type="Pfam" id="PF10778">
    <property type="entry name" value="DehI"/>
    <property type="match status" value="1"/>
</dbReference>
<reference key="1">
    <citation type="journal article" date="1992" name="J. Bacteriol.">
        <title>Cloning and partial sequencing of an operon encoding two Pseudomonas putida haloalkanoate dehalogenases of opposite stereospecificity.</title>
        <authorList>
            <person name="Barth P.T."/>
            <person name="Bolton L."/>
            <person name="Thomson J.C."/>
        </authorList>
    </citation>
    <scope>NUCLEOTIDE SEQUENCE [GENOMIC DNA]</scope>
    <source>
        <strain>AJ1</strain>
    </source>
</reference>
<reference key="2">
    <citation type="journal article" date="1999" name="J. Bacteriol.">
        <title>Investigation of two evolutionarily unrelated halocarboxylic acid dehalogenase gene families.</title>
        <authorList>
            <person name="Hill K.E."/>
            <person name="Marchesi J.R."/>
            <person name="Weightman A.J."/>
        </authorList>
    </citation>
    <scope>NUCLEOTIDE SEQUENCE [GENOMIC DNA]</scope>
</reference>
<accession>Q52086</accession>
<evidence type="ECO:0000305" key="1"/>
<evidence type="ECO:0007829" key="2">
    <source>
        <dbReference type="PDB" id="5GZY"/>
    </source>
</evidence>
<proteinExistence type="evidence at protein level"/>
<feature type="chain" id="PRO_0000079169" description="(R)-2-haloacid dehalogenase">
    <location>
        <begin position="1"/>
        <end position="301"/>
    </location>
</feature>
<feature type="turn" evidence="2">
    <location>
        <begin position="26"/>
        <end position="28"/>
    </location>
</feature>
<feature type="helix" evidence="2">
    <location>
        <begin position="31"/>
        <end position="44"/>
    </location>
</feature>
<feature type="helix" evidence="2">
    <location>
        <begin position="51"/>
        <end position="56"/>
    </location>
</feature>
<feature type="helix" evidence="2">
    <location>
        <begin position="60"/>
        <end position="74"/>
    </location>
</feature>
<feature type="helix" evidence="2">
    <location>
        <begin position="77"/>
        <end position="97"/>
    </location>
</feature>
<feature type="helix" evidence="2">
    <location>
        <begin position="104"/>
        <end position="110"/>
    </location>
</feature>
<feature type="helix" evidence="2">
    <location>
        <begin position="114"/>
        <end position="147"/>
    </location>
</feature>
<feature type="helix" evidence="2">
    <location>
        <begin position="158"/>
        <end position="161"/>
    </location>
</feature>
<feature type="turn" evidence="2">
    <location>
        <begin position="179"/>
        <end position="181"/>
    </location>
</feature>
<feature type="helix" evidence="2">
    <location>
        <begin position="184"/>
        <end position="197"/>
    </location>
</feature>
<feature type="helix" evidence="2">
    <location>
        <begin position="204"/>
        <end position="209"/>
    </location>
</feature>
<feature type="helix" evidence="2">
    <location>
        <begin position="213"/>
        <end position="223"/>
    </location>
</feature>
<feature type="helix" evidence="2">
    <location>
        <begin position="224"/>
        <end position="226"/>
    </location>
</feature>
<feature type="helix" evidence="2">
    <location>
        <begin position="230"/>
        <end position="248"/>
    </location>
</feature>
<feature type="helix" evidence="2">
    <location>
        <begin position="258"/>
        <end position="264"/>
    </location>
</feature>
<feature type="helix" evidence="2">
    <location>
        <begin position="268"/>
        <end position="298"/>
    </location>
</feature>
<comment type="function">
    <text>Catalyzes the hydrolytic dehalogenation of small (R)-2-haloalkanoic acids to yield the corresponding (S)-2-hydroxyalkanoic acids. Acts on acids of short chain lengths, C(2) to C(4), with inversion of configuration at C-2.</text>
</comment>
<comment type="catalytic activity">
    <reaction>
        <text>an (R)-2-haloacid + H2O = a (2S)-2-hydroxycarboxylate + a halide anion + H(+)</text>
        <dbReference type="Rhea" id="RHEA:22188"/>
        <dbReference type="ChEBI" id="CHEBI:15377"/>
        <dbReference type="ChEBI" id="CHEBI:15378"/>
        <dbReference type="ChEBI" id="CHEBI:16042"/>
        <dbReference type="ChEBI" id="CHEBI:58123"/>
        <dbReference type="ChEBI" id="CHEBI:137406"/>
        <dbReference type="EC" id="3.8.1.9"/>
    </reaction>
</comment>
<comment type="subunit">
    <text>Homotetramer.</text>
</comment>
<comment type="similarity">
    <text evidence="1">Belongs to the HAD-like hydrolase superfamily. S-2-haloalkanoic acid dehalogenase family.</text>
</comment>
<comment type="sequence caution" evidence="1">
    <conflict type="frameshift">
        <sequence resource="EMBL-CDS" id="AAA25831"/>
    </conflict>
</comment>
<keyword id="KW-0002">3D-structure</keyword>
<keyword id="KW-0378">Hydrolase</keyword>
<organism>
    <name type="scientific">Pseudomonas putida</name>
    <name type="common">Arthrobacter siderocapsulatus</name>
    <dbReference type="NCBI Taxonomy" id="303"/>
    <lineage>
        <taxon>Bacteria</taxon>
        <taxon>Pseudomonadati</taxon>
        <taxon>Pseudomonadota</taxon>
        <taxon>Gammaproteobacteria</taxon>
        <taxon>Pseudomonadales</taxon>
        <taxon>Pseudomonadaceae</taxon>
        <taxon>Pseudomonas</taxon>
    </lineage>
</organism>
<protein>
    <recommendedName>
        <fullName>(R)-2-haloacid dehalogenase</fullName>
        <ecNumber>3.8.1.9</ecNumber>
    </recommendedName>
    <alternativeName>
        <fullName>D-2-haloacid dehalogenase</fullName>
    </alternativeName>
    <alternativeName>
        <fullName>D-DEX</fullName>
    </alternativeName>
</protein>